<dbReference type="EC" id="5.1.1.3" evidence="1"/>
<dbReference type="EMBL" id="CP000725">
    <property type="protein sequence ID" value="ABV10756.1"/>
    <property type="molecule type" value="Genomic_DNA"/>
</dbReference>
<dbReference type="RefSeq" id="WP_012130733.1">
    <property type="nucleotide sequence ID" value="NC_009785.1"/>
</dbReference>
<dbReference type="SMR" id="A8AYU3"/>
<dbReference type="STRING" id="467705.SGO_1676"/>
<dbReference type="KEGG" id="sgo:SGO_1676"/>
<dbReference type="eggNOG" id="COG0796">
    <property type="taxonomic scope" value="Bacteria"/>
</dbReference>
<dbReference type="HOGENOM" id="CLU_052344_0_2_9"/>
<dbReference type="UniPathway" id="UPA00219"/>
<dbReference type="Proteomes" id="UP000001131">
    <property type="component" value="Chromosome"/>
</dbReference>
<dbReference type="GO" id="GO:0008881">
    <property type="term" value="F:glutamate racemase activity"/>
    <property type="evidence" value="ECO:0007669"/>
    <property type="project" value="UniProtKB-UniRule"/>
</dbReference>
<dbReference type="GO" id="GO:0071555">
    <property type="term" value="P:cell wall organization"/>
    <property type="evidence" value="ECO:0007669"/>
    <property type="project" value="UniProtKB-KW"/>
</dbReference>
<dbReference type="GO" id="GO:0009252">
    <property type="term" value="P:peptidoglycan biosynthetic process"/>
    <property type="evidence" value="ECO:0007669"/>
    <property type="project" value="UniProtKB-UniRule"/>
</dbReference>
<dbReference type="GO" id="GO:0008360">
    <property type="term" value="P:regulation of cell shape"/>
    <property type="evidence" value="ECO:0007669"/>
    <property type="project" value="UniProtKB-KW"/>
</dbReference>
<dbReference type="FunFam" id="3.40.50.1860:FF:000002">
    <property type="entry name" value="Glutamate racemase"/>
    <property type="match status" value="1"/>
</dbReference>
<dbReference type="Gene3D" id="3.40.50.1860">
    <property type="match status" value="2"/>
</dbReference>
<dbReference type="HAMAP" id="MF_00258">
    <property type="entry name" value="Glu_racemase"/>
    <property type="match status" value="1"/>
</dbReference>
<dbReference type="InterPro" id="IPR015942">
    <property type="entry name" value="Asp/Glu/hydantoin_racemase"/>
</dbReference>
<dbReference type="InterPro" id="IPR001920">
    <property type="entry name" value="Asp/Glu_race"/>
</dbReference>
<dbReference type="InterPro" id="IPR018187">
    <property type="entry name" value="Asp/Glu_racemase_AS_1"/>
</dbReference>
<dbReference type="InterPro" id="IPR033134">
    <property type="entry name" value="Asp/Glu_racemase_AS_2"/>
</dbReference>
<dbReference type="InterPro" id="IPR004391">
    <property type="entry name" value="Glu_race"/>
</dbReference>
<dbReference type="NCBIfam" id="TIGR00067">
    <property type="entry name" value="glut_race"/>
    <property type="match status" value="1"/>
</dbReference>
<dbReference type="NCBIfam" id="NF002035">
    <property type="entry name" value="PRK00865.1-3"/>
    <property type="match status" value="1"/>
</dbReference>
<dbReference type="PANTHER" id="PTHR21198">
    <property type="entry name" value="GLUTAMATE RACEMASE"/>
    <property type="match status" value="1"/>
</dbReference>
<dbReference type="PANTHER" id="PTHR21198:SF2">
    <property type="entry name" value="GLUTAMATE RACEMASE"/>
    <property type="match status" value="1"/>
</dbReference>
<dbReference type="Pfam" id="PF01177">
    <property type="entry name" value="Asp_Glu_race"/>
    <property type="match status" value="1"/>
</dbReference>
<dbReference type="SUPFAM" id="SSF53681">
    <property type="entry name" value="Aspartate/glutamate racemase"/>
    <property type="match status" value="2"/>
</dbReference>
<dbReference type="PROSITE" id="PS00923">
    <property type="entry name" value="ASP_GLU_RACEMASE_1"/>
    <property type="match status" value="1"/>
</dbReference>
<dbReference type="PROSITE" id="PS00924">
    <property type="entry name" value="ASP_GLU_RACEMASE_2"/>
    <property type="match status" value="1"/>
</dbReference>
<evidence type="ECO:0000255" key="1">
    <source>
        <dbReference type="HAMAP-Rule" id="MF_00258"/>
    </source>
</evidence>
<accession>A8AYU3</accession>
<reference key="1">
    <citation type="journal article" date="2007" name="J. Bacteriol.">
        <title>Genome-wide transcriptional changes in Streptococcus gordonii in response to competence signaling peptide.</title>
        <authorList>
            <person name="Vickerman M.M."/>
            <person name="Iobst S."/>
            <person name="Jesionowski A.M."/>
            <person name="Gill S.R."/>
        </authorList>
    </citation>
    <scope>NUCLEOTIDE SEQUENCE [LARGE SCALE GENOMIC DNA]</scope>
    <source>
        <strain>Challis / ATCC 35105 / BCRC 15272 / CH1 / DL1 / V288</strain>
    </source>
</reference>
<name>MURI_STRGC</name>
<gene>
    <name evidence="1" type="primary">murI</name>
    <name type="ordered locus">SGO_1676</name>
</gene>
<comment type="function">
    <text evidence="1">Provides the (R)-glutamate required for cell wall biosynthesis.</text>
</comment>
<comment type="catalytic activity">
    <reaction evidence="1">
        <text>L-glutamate = D-glutamate</text>
        <dbReference type="Rhea" id="RHEA:12813"/>
        <dbReference type="ChEBI" id="CHEBI:29985"/>
        <dbReference type="ChEBI" id="CHEBI:29986"/>
        <dbReference type="EC" id="5.1.1.3"/>
    </reaction>
</comment>
<comment type="pathway">
    <text evidence="1">Cell wall biogenesis; peptidoglycan biosynthesis.</text>
</comment>
<comment type="similarity">
    <text evidence="1">Belongs to the aspartate/glutamate racemases family.</text>
</comment>
<organism>
    <name type="scientific">Streptococcus gordonii (strain Challis / ATCC 35105 / BCRC 15272 / CH1 / DL1 / V288)</name>
    <dbReference type="NCBI Taxonomy" id="467705"/>
    <lineage>
        <taxon>Bacteria</taxon>
        <taxon>Bacillati</taxon>
        <taxon>Bacillota</taxon>
        <taxon>Bacilli</taxon>
        <taxon>Lactobacillales</taxon>
        <taxon>Streptococcaceae</taxon>
        <taxon>Streptococcus</taxon>
    </lineage>
</organism>
<keyword id="KW-0133">Cell shape</keyword>
<keyword id="KW-0961">Cell wall biogenesis/degradation</keyword>
<keyword id="KW-0413">Isomerase</keyword>
<keyword id="KW-0573">Peptidoglycan synthesis</keyword>
<keyword id="KW-1185">Reference proteome</keyword>
<protein>
    <recommendedName>
        <fullName evidence="1">Glutamate racemase</fullName>
        <ecNumber evidence="1">5.1.1.3</ecNumber>
    </recommendedName>
</protein>
<sequence>MDNRPIGFLDSGVGGLTVVRELMRQLPHEEVIYIGDSARAPYGPRPAEQIRDYTWQLVNFLLTKDVKMIVIACNTATAVVWEEIKEKLDIPVLGVILPGASAAIKSTHSGKIGVIGTPMTVTSDIYRKKIEALSPEMEVSSLACPKFVPLVESNELTSSVTKKVVYETLLPLAGKVDTLVLGCTHYPLLRSIIQNVMGPDVKLIDSGAECVRDISVLLNYFEINRSREEQTLRHRFYTTASAKSFAEIAEHWLGQKVSVEHIDL</sequence>
<proteinExistence type="inferred from homology"/>
<feature type="chain" id="PRO_1000078579" description="Glutamate racemase">
    <location>
        <begin position="1"/>
        <end position="264"/>
    </location>
</feature>
<feature type="active site" description="Proton donor/acceptor" evidence="1">
    <location>
        <position position="73"/>
    </location>
</feature>
<feature type="active site" description="Proton donor/acceptor" evidence="1">
    <location>
        <position position="183"/>
    </location>
</feature>
<feature type="binding site" evidence="1">
    <location>
        <begin position="10"/>
        <end position="11"/>
    </location>
    <ligand>
        <name>substrate</name>
    </ligand>
</feature>
<feature type="binding site" evidence="1">
    <location>
        <begin position="42"/>
        <end position="43"/>
    </location>
    <ligand>
        <name>substrate</name>
    </ligand>
</feature>
<feature type="binding site" evidence="1">
    <location>
        <begin position="74"/>
        <end position="75"/>
    </location>
    <ligand>
        <name>substrate</name>
    </ligand>
</feature>
<feature type="binding site" evidence="1">
    <location>
        <begin position="184"/>
        <end position="185"/>
    </location>
    <ligand>
        <name>substrate</name>
    </ligand>
</feature>